<keyword id="KW-0028">Amino-acid biosynthesis</keyword>
<keyword id="KW-0963">Cytoplasm</keyword>
<keyword id="KW-0220">Diaminopimelate biosynthesis</keyword>
<keyword id="KW-0457">Lysine biosynthesis</keyword>
<keyword id="KW-0520">NAD</keyword>
<keyword id="KW-0521">NADP</keyword>
<keyword id="KW-0560">Oxidoreductase</keyword>
<keyword id="KW-1185">Reference proteome</keyword>
<evidence type="ECO:0000255" key="1">
    <source>
        <dbReference type="HAMAP-Rule" id="MF_00102"/>
    </source>
</evidence>
<evidence type="ECO:0000305" key="2"/>
<gene>
    <name evidence="1" type="primary">dapB</name>
    <name type="ordered locus">RD1_0650</name>
</gene>
<name>DAPB_ROSDO</name>
<proteinExistence type="inferred from homology"/>
<comment type="function">
    <text evidence="1">Catalyzes the conversion of 4-hydroxy-tetrahydrodipicolinate (HTPA) to tetrahydrodipicolinate.</text>
</comment>
<comment type="catalytic activity">
    <reaction evidence="1">
        <text>(S)-2,3,4,5-tetrahydrodipicolinate + NAD(+) + H2O = (2S,4S)-4-hydroxy-2,3,4,5-tetrahydrodipicolinate + NADH + H(+)</text>
        <dbReference type="Rhea" id="RHEA:35323"/>
        <dbReference type="ChEBI" id="CHEBI:15377"/>
        <dbReference type="ChEBI" id="CHEBI:15378"/>
        <dbReference type="ChEBI" id="CHEBI:16845"/>
        <dbReference type="ChEBI" id="CHEBI:57540"/>
        <dbReference type="ChEBI" id="CHEBI:57945"/>
        <dbReference type="ChEBI" id="CHEBI:67139"/>
        <dbReference type="EC" id="1.17.1.8"/>
    </reaction>
</comment>
<comment type="catalytic activity">
    <reaction evidence="1">
        <text>(S)-2,3,4,5-tetrahydrodipicolinate + NADP(+) + H2O = (2S,4S)-4-hydroxy-2,3,4,5-tetrahydrodipicolinate + NADPH + H(+)</text>
        <dbReference type="Rhea" id="RHEA:35331"/>
        <dbReference type="ChEBI" id="CHEBI:15377"/>
        <dbReference type="ChEBI" id="CHEBI:15378"/>
        <dbReference type="ChEBI" id="CHEBI:16845"/>
        <dbReference type="ChEBI" id="CHEBI:57783"/>
        <dbReference type="ChEBI" id="CHEBI:58349"/>
        <dbReference type="ChEBI" id="CHEBI:67139"/>
        <dbReference type="EC" id="1.17.1.8"/>
    </reaction>
</comment>
<comment type="pathway">
    <text evidence="1">Amino-acid biosynthesis; L-lysine biosynthesis via DAP pathway; (S)-tetrahydrodipicolinate from L-aspartate: step 4/4.</text>
</comment>
<comment type="subcellular location">
    <subcellularLocation>
        <location evidence="1">Cytoplasm</location>
    </subcellularLocation>
</comment>
<comment type="similarity">
    <text evidence="1">Belongs to the DapB family.</text>
</comment>
<comment type="caution">
    <text evidence="2">Was originally thought to be a dihydrodipicolinate reductase (DHDPR), catalyzing the conversion of dihydrodipicolinate to tetrahydrodipicolinate. However, it was shown in E.coli that the substrate of the enzymatic reaction is not dihydrodipicolinate (DHDP) but in fact (2S,4S)-4-hydroxy-2,3,4,5-tetrahydrodipicolinic acid (HTPA), the product released by the DapA-catalyzed reaction.</text>
</comment>
<organism>
    <name type="scientific">Roseobacter denitrificans (strain ATCC 33942 / OCh 114)</name>
    <name type="common">Erythrobacter sp. (strain OCh 114)</name>
    <name type="synonym">Roseobacter denitrificans</name>
    <dbReference type="NCBI Taxonomy" id="375451"/>
    <lineage>
        <taxon>Bacteria</taxon>
        <taxon>Pseudomonadati</taxon>
        <taxon>Pseudomonadota</taxon>
        <taxon>Alphaproteobacteria</taxon>
        <taxon>Rhodobacterales</taxon>
        <taxon>Roseobacteraceae</taxon>
        <taxon>Roseobacter</taxon>
    </lineage>
</organism>
<dbReference type="EC" id="1.17.1.8" evidence="1"/>
<dbReference type="EMBL" id="CP000362">
    <property type="protein sequence ID" value="ABG30348.1"/>
    <property type="molecule type" value="Genomic_DNA"/>
</dbReference>
<dbReference type="RefSeq" id="WP_011566970.1">
    <property type="nucleotide sequence ID" value="NC_008209.1"/>
</dbReference>
<dbReference type="SMR" id="Q16CE5"/>
<dbReference type="STRING" id="375451.RD1_0650"/>
<dbReference type="KEGG" id="rde:RD1_0650"/>
<dbReference type="eggNOG" id="COG0289">
    <property type="taxonomic scope" value="Bacteria"/>
</dbReference>
<dbReference type="HOGENOM" id="CLU_047479_2_1_5"/>
<dbReference type="OrthoDB" id="9790352at2"/>
<dbReference type="UniPathway" id="UPA00034">
    <property type="reaction ID" value="UER00018"/>
</dbReference>
<dbReference type="Proteomes" id="UP000007029">
    <property type="component" value="Chromosome"/>
</dbReference>
<dbReference type="GO" id="GO:0005829">
    <property type="term" value="C:cytosol"/>
    <property type="evidence" value="ECO:0007669"/>
    <property type="project" value="TreeGrafter"/>
</dbReference>
<dbReference type="GO" id="GO:0008839">
    <property type="term" value="F:4-hydroxy-tetrahydrodipicolinate reductase"/>
    <property type="evidence" value="ECO:0007669"/>
    <property type="project" value="UniProtKB-EC"/>
</dbReference>
<dbReference type="GO" id="GO:0051287">
    <property type="term" value="F:NAD binding"/>
    <property type="evidence" value="ECO:0007669"/>
    <property type="project" value="UniProtKB-UniRule"/>
</dbReference>
<dbReference type="GO" id="GO:0050661">
    <property type="term" value="F:NADP binding"/>
    <property type="evidence" value="ECO:0007669"/>
    <property type="project" value="UniProtKB-UniRule"/>
</dbReference>
<dbReference type="GO" id="GO:0016726">
    <property type="term" value="F:oxidoreductase activity, acting on CH or CH2 groups, NAD or NADP as acceptor"/>
    <property type="evidence" value="ECO:0007669"/>
    <property type="project" value="UniProtKB-UniRule"/>
</dbReference>
<dbReference type="GO" id="GO:0019877">
    <property type="term" value="P:diaminopimelate biosynthetic process"/>
    <property type="evidence" value="ECO:0007669"/>
    <property type="project" value="UniProtKB-UniRule"/>
</dbReference>
<dbReference type="GO" id="GO:0009089">
    <property type="term" value="P:lysine biosynthetic process via diaminopimelate"/>
    <property type="evidence" value="ECO:0007669"/>
    <property type="project" value="UniProtKB-UniRule"/>
</dbReference>
<dbReference type="CDD" id="cd02274">
    <property type="entry name" value="DHDPR_N"/>
    <property type="match status" value="1"/>
</dbReference>
<dbReference type="FunFam" id="3.30.360.10:FF:000004">
    <property type="entry name" value="4-hydroxy-tetrahydrodipicolinate reductase"/>
    <property type="match status" value="1"/>
</dbReference>
<dbReference type="Gene3D" id="3.30.360.10">
    <property type="entry name" value="Dihydrodipicolinate Reductase, domain 2"/>
    <property type="match status" value="1"/>
</dbReference>
<dbReference type="Gene3D" id="3.40.50.720">
    <property type="entry name" value="NAD(P)-binding Rossmann-like Domain"/>
    <property type="match status" value="1"/>
</dbReference>
<dbReference type="HAMAP" id="MF_00102">
    <property type="entry name" value="DapB"/>
    <property type="match status" value="1"/>
</dbReference>
<dbReference type="InterPro" id="IPR022663">
    <property type="entry name" value="DapB_C"/>
</dbReference>
<dbReference type="InterPro" id="IPR000846">
    <property type="entry name" value="DapB_N"/>
</dbReference>
<dbReference type="InterPro" id="IPR022664">
    <property type="entry name" value="DapB_N_CS"/>
</dbReference>
<dbReference type="InterPro" id="IPR023940">
    <property type="entry name" value="DHDPR_bac"/>
</dbReference>
<dbReference type="InterPro" id="IPR036291">
    <property type="entry name" value="NAD(P)-bd_dom_sf"/>
</dbReference>
<dbReference type="NCBIfam" id="TIGR00036">
    <property type="entry name" value="dapB"/>
    <property type="match status" value="1"/>
</dbReference>
<dbReference type="PANTHER" id="PTHR20836:SF0">
    <property type="entry name" value="4-HYDROXY-TETRAHYDRODIPICOLINATE REDUCTASE 1, CHLOROPLASTIC-RELATED"/>
    <property type="match status" value="1"/>
</dbReference>
<dbReference type="PANTHER" id="PTHR20836">
    <property type="entry name" value="DIHYDRODIPICOLINATE REDUCTASE"/>
    <property type="match status" value="1"/>
</dbReference>
<dbReference type="Pfam" id="PF05173">
    <property type="entry name" value="DapB_C"/>
    <property type="match status" value="1"/>
</dbReference>
<dbReference type="Pfam" id="PF01113">
    <property type="entry name" value="DapB_N"/>
    <property type="match status" value="1"/>
</dbReference>
<dbReference type="PIRSF" id="PIRSF000161">
    <property type="entry name" value="DHPR"/>
    <property type="match status" value="1"/>
</dbReference>
<dbReference type="SUPFAM" id="SSF55347">
    <property type="entry name" value="Glyceraldehyde-3-phosphate dehydrogenase-like, C-terminal domain"/>
    <property type="match status" value="1"/>
</dbReference>
<dbReference type="SUPFAM" id="SSF51735">
    <property type="entry name" value="NAD(P)-binding Rossmann-fold domains"/>
    <property type="match status" value="1"/>
</dbReference>
<dbReference type="PROSITE" id="PS01298">
    <property type="entry name" value="DAPB"/>
    <property type="match status" value="1"/>
</dbReference>
<feature type="chain" id="PRO_1000008628" description="4-hydroxy-tetrahydrodipicolinate reductase">
    <location>
        <begin position="1"/>
        <end position="272"/>
    </location>
</feature>
<feature type="active site" description="Proton donor/acceptor" evidence="1">
    <location>
        <position position="158"/>
    </location>
</feature>
<feature type="active site" description="Proton donor" evidence="1">
    <location>
        <position position="162"/>
    </location>
</feature>
<feature type="binding site" evidence="1">
    <location>
        <begin position="11"/>
        <end position="16"/>
    </location>
    <ligand>
        <name>NAD(+)</name>
        <dbReference type="ChEBI" id="CHEBI:57540"/>
    </ligand>
</feature>
<feature type="binding site" evidence="1">
    <location>
        <position position="37"/>
    </location>
    <ligand>
        <name>NAD(+)</name>
        <dbReference type="ChEBI" id="CHEBI:57540"/>
    </ligand>
</feature>
<feature type="binding site" evidence="1">
    <location>
        <position position="38"/>
    </location>
    <ligand>
        <name>NADP(+)</name>
        <dbReference type="ChEBI" id="CHEBI:58349"/>
    </ligand>
</feature>
<feature type="binding site" evidence="1">
    <location>
        <begin position="101"/>
        <end position="103"/>
    </location>
    <ligand>
        <name>NAD(+)</name>
        <dbReference type="ChEBI" id="CHEBI:57540"/>
    </ligand>
</feature>
<feature type="binding site" evidence="1">
    <location>
        <begin position="125"/>
        <end position="128"/>
    </location>
    <ligand>
        <name>NAD(+)</name>
        <dbReference type="ChEBI" id="CHEBI:57540"/>
    </ligand>
</feature>
<feature type="binding site" evidence="1">
    <location>
        <position position="159"/>
    </location>
    <ligand>
        <name>(S)-2,3,4,5-tetrahydrodipicolinate</name>
        <dbReference type="ChEBI" id="CHEBI:16845"/>
    </ligand>
</feature>
<feature type="binding site" evidence="1">
    <location>
        <begin position="168"/>
        <end position="169"/>
    </location>
    <ligand>
        <name>(S)-2,3,4,5-tetrahydrodipicolinate</name>
        <dbReference type="ChEBI" id="CHEBI:16845"/>
    </ligand>
</feature>
<protein>
    <recommendedName>
        <fullName evidence="1">4-hydroxy-tetrahydrodipicolinate reductase</fullName>
        <shortName evidence="1">HTPA reductase</shortName>
        <ecNumber evidence="1">1.17.1.8</ecNumber>
    </recommendedName>
</protein>
<sequence length="272" mass="28301">MTTPMKIAITGVSGRMGRMLVDTIDTSDAVTLSAALERPGHDWIGRDLGLALGGTERGVLVSDDIDSALADSEAVIDFTSPAATIRFAQAAARVGAIHVIGTTGMTEQEIAQIDAQAAGAVIVRAGNMSLGVNLLVQLTKRVAAALDEDFDIEVIESHHNQKVDAPSGTALMLGEAAAEGRGVSLDAVSDRGRDGLTGARQKGDIGFVSVRGGDIVGEHDVLFAAQGERITLRHVASDRSVFARGALKAALWARHRAPGAYDMLDVLGLKDG</sequence>
<reference key="1">
    <citation type="journal article" date="2007" name="J. Bacteriol.">
        <title>The complete genome sequence of Roseobacter denitrificans reveals a mixotrophic rather than photosynthetic metabolism.</title>
        <authorList>
            <person name="Swingley W.D."/>
            <person name="Sadekar S."/>
            <person name="Mastrian S.D."/>
            <person name="Matthies H.J."/>
            <person name="Hao J."/>
            <person name="Ramos H."/>
            <person name="Acharya C.R."/>
            <person name="Conrad A.L."/>
            <person name="Taylor H.L."/>
            <person name="Dejesa L.C."/>
            <person name="Shah M.K."/>
            <person name="O'Huallachain M.E."/>
            <person name="Lince M.T."/>
            <person name="Blankenship R.E."/>
            <person name="Beatty J.T."/>
            <person name="Touchman J.W."/>
        </authorList>
    </citation>
    <scope>NUCLEOTIDE SEQUENCE [LARGE SCALE GENOMIC DNA]</scope>
    <source>
        <strain>ATCC 33942 / OCh 114</strain>
    </source>
</reference>
<accession>Q16CE5</accession>